<proteinExistence type="evidence at protein level"/>
<dbReference type="EMBL" id="X51606">
    <property type="protein sequence ID" value="CAA35949.1"/>
    <property type="molecule type" value="Genomic_DNA"/>
</dbReference>
<dbReference type="EMBL" id="U18916">
    <property type="protein sequence ID" value="AAC03209.1"/>
    <property type="molecule type" value="Genomic_DNA"/>
</dbReference>
<dbReference type="EMBL" id="BK006939">
    <property type="protein sequence ID" value="DAA07771.1"/>
    <property type="molecule type" value="Genomic_DNA"/>
</dbReference>
<dbReference type="PIR" id="S50614">
    <property type="entry name" value="S50614"/>
</dbReference>
<dbReference type="RefSeq" id="NP_011036.1">
    <property type="nucleotide sequence ID" value="NM_001179001.1"/>
</dbReference>
<dbReference type="SMR" id="P25302"/>
<dbReference type="BioGRID" id="36856">
    <property type="interactions" value="666"/>
</dbReference>
<dbReference type="ComplexPortal" id="CPX-946">
    <property type="entry name" value="SBF transcription complex"/>
</dbReference>
<dbReference type="DIP" id="DIP-847N"/>
<dbReference type="FunCoup" id="P25302">
    <property type="interactions" value="1621"/>
</dbReference>
<dbReference type="IntAct" id="P25302">
    <property type="interactions" value="81"/>
</dbReference>
<dbReference type="MINT" id="P25302"/>
<dbReference type="STRING" id="4932.YER111C"/>
<dbReference type="GlyGen" id="P25302">
    <property type="glycosylation" value="3 sites, 1 O-linked glycan (3 sites)"/>
</dbReference>
<dbReference type="iPTMnet" id="P25302"/>
<dbReference type="PaxDb" id="4932-YER111C"/>
<dbReference type="PeptideAtlas" id="P25302"/>
<dbReference type="EnsemblFungi" id="YER111C_mRNA">
    <property type="protein sequence ID" value="YER111C"/>
    <property type="gene ID" value="YER111C"/>
</dbReference>
<dbReference type="GeneID" id="856847"/>
<dbReference type="KEGG" id="sce:YER111C"/>
<dbReference type="AGR" id="SGD:S000000913"/>
<dbReference type="SGD" id="S000000913">
    <property type="gene designation" value="SWI4"/>
</dbReference>
<dbReference type="VEuPathDB" id="FungiDB:YER111C"/>
<dbReference type="eggNOG" id="ENOG502QUTG">
    <property type="taxonomic scope" value="Eukaryota"/>
</dbReference>
<dbReference type="HOGENOM" id="CLU_009666_0_0_1"/>
<dbReference type="InParanoid" id="P25302"/>
<dbReference type="OMA" id="WINITQI"/>
<dbReference type="OrthoDB" id="6718656at2759"/>
<dbReference type="BioCyc" id="YEAST:G3O-30275-MONOMER"/>
<dbReference type="BioGRID-ORCS" id="856847">
    <property type="hits" value="7 hits in 13 CRISPR screens"/>
</dbReference>
<dbReference type="ChiTaRS" id="LDB19">
    <property type="organism name" value="yeast"/>
</dbReference>
<dbReference type="PRO" id="PR:P25302"/>
<dbReference type="Proteomes" id="UP000002311">
    <property type="component" value="Chromosome V"/>
</dbReference>
<dbReference type="RNAct" id="P25302">
    <property type="molecule type" value="protein"/>
</dbReference>
<dbReference type="GO" id="GO:0000785">
    <property type="term" value="C:chromatin"/>
    <property type="evidence" value="ECO:0000314"/>
    <property type="project" value="SGD"/>
</dbReference>
<dbReference type="GO" id="GO:0030907">
    <property type="term" value="C:MBF transcription complex"/>
    <property type="evidence" value="ECO:0000318"/>
    <property type="project" value="GO_Central"/>
</dbReference>
<dbReference type="GO" id="GO:0005634">
    <property type="term" value="C:nucleus"/>
    <property type="evidence" value="ECO:0000303"/>
    <property type="project" value="ComplexPortal"/>
</dbReference>
<dbReference type="GO" id="GO:0033309">
    <property type="term" value="C:SBF transcription complex"/>
    <property type="evidence" value="ECO:0000314"/>
    <property type="project" value="SGD"/>
</dbReference>
<dbReference type="GO" id="GO:0001228">
    <property type="term" value="F:DNA-binding transcription activator activity, RNA polymerase II-specific"/>
    <property type="evidence" value="ECO:0000315"/>
    <property type="project" value="SGD"/>
</dbReference>
<dbReference type="GO" id="GO:0042802">
    <property type="term" value="F:identical protein binding"/>
    <property type="evidence" value="ECO:0000353"/>
    <property type="project" value="IntAct"/>
</dbReference>
<dbReference type="GO" id="GO:0043565">
    <property type="term" value="F:sequence-specific DNA binding"/>
    <property type="evidence" value="ECO:0007005"/>
    <property type="project" value="SGD"/>
</dbReference>
<dbReference type="GO" id="GO:0034605">
    <property type="term" value="P:cellular response to heat"/>
    <property type="evidence" value="ECO:0000315"/>
    <property type="project" value="SGD"/>
</dbReference>
<dbReference type="GO" id="GO:0000082">
    <property type="term" value="P:G1/S transition of mitotic cell cycle"/>
    <property type="evidence" value="ECO:0000314"/>
    <property type="project" value="ComplexPortal"/>
</dbReference>
<dbReference type="GO" id="GO:0045944">
    <property type="term" value="P:positive regulation of transcription by RNA polymerase II"/>
    <property type="evidence" value="ECO:0000315"/>
    <property type="project" value="SGD"/>
</dbReference>
<dbReference type="GO" id="GO:0006355">
    <property type="term" value="P:regulation of DNA-templated transcription"/>
    <property type="evidence" value="ECO:0000315"/>
    <property type="project" value="ComplexPortal"/>
</dbReference>
<dbReference type="FunFam" id="1.25.40.20:FF:000361">
    <property type="entry name" value="Swi4p"/>
    <property type="match status" value="1"/>
</dbReference>
<dbReference type="FunFam" id="3.10.260.10:FF:000006">
    <property type="entry name" value="Swi4p"/>
    <property type="match status" value="1"/>
</dbReference>
<dbReference type="Gene3D" id="1.25.40.20">
    <property type="entry name" value="Ankyrin repeat-containing domain"/>
    <property type="match status" value="1"/>
</dbReference>
<dbReference type="Gene3D" id="3.10.260.10">
    <property type="entry name" value="Transcription regulator HTH, APSES-type DNA-binding domain"/>
    <property type="match status" value="1"/>
</dbReference>
<dbReference type="InterPro" id="IPR002110">
    <property type="entry name" value="Ankyrin_rpt"/>
</dbReference>
<dbReference type="InterPro" id="IPR036770">
    <property type="entry name" value="Ankyrin_rpt-contain_sf"/>
</dbReference>
<dbReference type="InterPro" id="IPR036887">
    <property type="entry name" value="HTH_APSES_sf"/>
</dbReference>
<dbReference type="InterPro" id="IPR018004">
    <property type="entry name" value="KilA/APSES_HTH"/>
</dbReference>
<dbReference type="InterPro" id="IPR051642">
    <property type="entry name" value="SWI6-like"/>
</dbReference>
<dbReference type="InterPro" id="IPR003163">
    <property type="entry name" value="Tscrpt_reg_HTH_APSES-type"/>
</dbReference>
<dbReference type="PANTHER" id="PTHR43828">
    <property type="entry name" value="ASPARAGINASE"/>
    <property type="match status" value="1"/>
</dbReference>
<dbReference type="PANTHER" id="PTHR43828:SF7">
    <property type="entry name" value="REGULATORY PROTEIN SWI4"/>
    <property type="match status" value="1"/>
</dbReference>
<dbReference type="Pfam" id="PF00023">
    <property type="entry name" value="Ank"/>
    <property type="match status" value="1"/>
</dbReference>
<dbReference type="Pfam" id="PF04383">
    <property type="entry name" value="KilA-N"/>
    <property type="match status" value="1"/>
</dbReference>
<dbReference type="SMART" id="SM00248">
    <property type="entry name" value="ANK"/>
    <property type="match status" value="2"/>
</dbReference>
<dbReference type="SMART" id="SM01252">
    <property type="entry name" value="KilA-N"/>
    <property type="match status" value="1"/>
</dbReference>
<dbReference type="SUPFAM" id="SSF48403">
    <property type="entry name" value="Ankyrin repeat"/>
    <property type="match status" value="1"/>
</dbReference>
<dbReference type="SUPFAM" id="SSF54616">
    <property type="entry name" value="DNA-binding domain of Mlu1-box binding protein MBP1"/>
    <property type="match status" value="1"/>
</dbReference>
<dbReference type="PROSITE" id="PS50297">
    <property type="entry name" value="ANK_REP_REGION"/>
    <property type="match status" value="2"/>
</dbReference>
<dbReference type="PROSITE" id="PS50088">
    <property type="entry name" value="ANK_REPEAT"/>
    <property type="match status" value="2"/>
</dbReference>
<dbReference type="PROSITE" id="PS51299">
    <property type="entry name" value="HTH_APSES"/>
    <property type="match status" value="1"/>
</dbReference>
<evidence type="ECO:0000255" key="1">
    <source>
        <dbReference type="PROSITE-ProRule" id="PRU00630"/>
    </source>
</evidence>
<evidence type="ECO:0000256" key="2">
    <source>
        <dbReference type="SAM" id="MobiDB-lite"/>
    </source>
</evidence>
<evidence type="ECO:0000269" key="3">
    <source>
    </source>
</evidence>
<evidence type="ECO:0000269" key="4">
    <source>
    </source>
</evidence>
<evidence type="ECO:0000305" key="5"/>
<evidence type="ECO:0007744" key="6">
    <source>
    </source>
</evidence>
<comment type="function">
    <text>Part of a complex involved in cell-cycle-dependent transcription. SWI4 and SWI6 are required for formation of the cell-cycle box factor-DNA complex. The repeated element in the upstream region of HO (5'-CACGAAAA-3') is called the cell cycle box (CCB).</text>
</comment>
<comment type="subunit">
    <text evidence="4">Component of the transcription complex SCB-binding factor (SBF) composed of SWI6 and SWI4. Interacts with MSA2.</text>
</comment>
<comment type="interaction">
    <interactant intactId="EBI-18626">
        <id>P25302</id>
    </interactant>
    <interactant intactId="EBI-18626">
        <id>P25302</id>
        <label>SWI4</label>
    </interactant>
    <organismsDiffer>false</organismsDiffer>
    <experiments>4</experiments>
</comment>
<comment type="interaction">
    <interactant intactId="EBI-18626">
        <id>P25302</id>
    </interactant>
    <interactant intactId="EBI-18641">
        <id>P09959</id>
        <label>SWI6</label>
    </interactant>
    <organismsDiffer>false</organismsDiffer>
    <experiments>9</experiments>
</comment>
<comment type="miscellaneous">
    <text evidence="3">Present with 589 molecules/cell in log phase SD medium.</text>
</comment>
<protein>
    <recommendedName>
        <fullName>Regulatory protein SWI4</fullName>
    </recommendedName>
    <alternativeName>
        <fullName>Cell-cycle box factor subunit SWI4</fullName>
    </alternativeName>
    <alternativeName>
        <fullName>Protein ART1</fullName>
    </alternativeName>
</protein>
<gene>
    <name type="primary">SWI4</name>
    <name type="synonym">ART1</name>
    <name type="ordered locus">YER111C</name>
</gene>
<accession>P25302</accession>
<accession>D3DM17</accession>
<reference key="1">
    <citation type="journal article" date="1989" name="Nature">
        <title>The yeast SW14 protein contains a present in developmental regulators and is part of a complex involved in cell-cycle-dependent transcription.</title>
        <authorList>
            <person name="Andrews B.J."/>
            <person name="Herskowitz I."/>
        </authorList>
    </citation>
    <scope>NUCLEOTIDE SEQUENCE [GENOMIC DNA]</scope>
</reference>
<reference key="2">
    <citation type="journal article" date="1997" name="Nature">
        <title>The nucleotide sequence of Saccharomyces cerevisiae chromosome V.</title>
        <authorList>
            <person name="Dietrich F.S."/>
            <person name="Mulligan J.T."/>
            <person name="Hennessy K.M."/>
            <person name="Yelton M.A."/>
            <person name="Allen E."/>
            <person name="Araujo R."/>
            <person name="Aviles E."/>
            <person name="Berno A."/>
            <person name="Brennan T."/>
            <person name="Carpenter J."/>
            <person name="Chen E."/>
            <person name="Cherry J.M."/>
            <person name="Chung E."/>
            <person name="Duncan M."/>
            <person name="Guzman E."/>
            <person name="Hartzell G."/>
            <person name="Hunicke-Smith S."/>
            <person name="Hyman R.W."/>
            <person name="Kayser A."/>
            <person name="Komp C."/>
            <person name="Lashkari D."/>
            <person name="Lew H."/>
            <person name="Lin D."/>
            <person name="Mosedale D."/>
            <person name="Nakahara K."/>
            <person name="Namath A."/>
            <person name="Norgren R."/>
            <person name="Oefner P."/>
            <person name="Oh C."/>
            <person name="Petel F.X."/>
            <person name="Roberts D."/>
            <person name="Sehl P."/>
            <person name="Schramm S."/>
            <person name="Shogren T."/>
            <person name="Smith V."/>
            <person name="Taylor P."/>
            <person name="Wei Y."/>
            <person name="Botstein D."/>
            <person name="Davis R.W."/>
        </authorList>
    </citation>
    <scope>NUCLEOTIDE SEQUENCE [LARGE SCALE GENOMIC DNA]</scope>
    <source>
        <strain>ATCC 204508 / S288c</strain>
    </source>
</reference>
<reference key="3">
    <citation type="journal article" date="2014" name="G3 (Bethesda)">
        <title>The reference genome sequence of Saccharomyces cerevisiae: Then and now.</title>
        <authorList>
            <person name="Engel S.R."/>
            <person name="Dietrich F.S."/>
            <person name="Fisk D.G."/>
            <person name="Binkley G."/>
            <person name="Balakrishnan R."/>
            <person name="Costanzo M.C."/>
            <person name="Dwight S.S."/>
            <person name="Hitz B.C."/>
            <person name="Karra K."/>
            <person name="Nash R.S."/>
            <person name="Weng S."/>
            <person name="Wong E.D."/>
            <person name="Lloyd P."/>
            <person name="Skrzypek M.S."/>
            <person name="Miyasato S.R."/>
            <person name="Simison M."/>
            <person name="Cherry J.M."/>
        </authorList>
    </citation>
    <scope>GENOME REANNOTATION</scope>
    <source>
        <strain>ATCC 204508 / S288c</strain>
    </source>
</reference>
<reference key="4">
    <citation type="journal article" date="1993" name="Mol. Gen. Genet.">
        <title>Potentially rapid walking in cellular regulatory networks using the gene-gene interference method in yeast.</title>
        <authorList>
            <person name="Daniel J."/>
        </authorList>
    </citation>
    <scope>NUCLEOTIDE SEQUENCE [GENOMIC DNA] OF 845-1093</scope>
</reference>
<reference key="5">
    <citation type="journal article" date="2003" name="Nature">
        <title>Global analysis of protein expression in yeast.</title>
        <authorList>
            <person name="Ghaemmaghami S."/>
            <person name="Huh W.-K."/>
            <person name="Bower K."/>
            <person name="Howson R.W."/>
            <person name="Belle A."/>
            <person name="Dephoure N."/>
            <person name="O'Shea E.K."/>
            <person name="Weissman J.S."/>
        </authorList>
    </citation>
    <scope>LEVEL OF PROTEIN EXPRESSION [LARGE SCALE ANALYSIS]</scope>
</reference>
<reference key="6">
    <citation type="journal article" date="2007" name="Proc. Natl. Acad. Sci. U.S.A.">
        <title>Analysis of phosphorylation sites on proteins from Saccharomyces cerevisiae by electron transfer dissociation (ETD) mass spectrometry.</title>
        <authorList>
            <person name="Chi A."/>
            <person name="Huttenhower C."/>
            <person name="Geer L.Y."/>
            <person name="Coon J.J."/>
            <person name="Syka J.E.P."/>
            <person name="Bai D.L."/>
            <person name="Shabanowitz J."/>
            <person name="Burke D.J."/>
            <person name="Troyanskaya O.G."/>
            <person name="Hunt D.F."/>
        </authorList>
    </citation>
    <scope>IDENTIFICATION BY MASS SPECTROMETRY [LARGE SCALE ANALYSIS]</scope>
</reference>
<reference key="7">
    <citation type="journal article" date="2008" name="J. Biol. Chem.">
        <title>The SBF- and MBF-associated protein Msa1 is required for proper timing of G1-specific transcription in Saccharomyces cerevisiae.</title>
        <authorList>
            <person name="Ashe M."/>
            <person name="de Bruin R.A.M."/>
            <person name="Kalashnikova T."/>
            <person name="McDonald W.H."/>
            <person name="Yates J.R. III"/>
            <person name="Wittenberg C."/>
        </authorList>
    </citation>
    <scope>INTERACTION WITH MSA2</scope>
</reference>
<reference key="8">
    <citation type="journal article" date="2009" name="Science">
        <title>Global analysis of Cdk1 substrate phosphorylation sites provides insights into evolution.</title>
        <authorList>
            <person name="Holt L.J."/>
            <person name="Tuch B.B."/>
            <person name="Villen J."/>
            <person name="Johnson A.D."/>
            <person name="Gygi S.P."/>
            <person name="Morgan D.O."/>
        </authorList>
    </citation>
    <scope>PHOSPHORYLATION [LARGE SCALE ANALYSIS] AT SER-255 AND SER-806</scope>
    <scope>IDENTIFICATION BY MASS SPECTROMETRY [LARGE SCALE ANALYSIS]</scope>
</reference>
<keyword id="KW-0040">ANK repeat</keyword>
<keyword id="KW-0238">DNA-binding</keyword>
<keyword id="KW-0597">Phosphoprotein</keyword>
<keyword id="KW-1185">Reference proteome</keyword>
<keyword id="KW-0677">Repeat</keyword>
<keyword id="KW-0804">Transcription</keyword>
<keyword id="KW-0805">Transcription regulation</keyword>
<feature type="chain" id="PRO_0000067069" description="Regulatory protein SWI4">
    <location>
        <begin position="1"/>
        <end position="1093"/>
    </location>
</feature>
<feature type="domain" description="HTH APSES-type" evidence="1">
    <location>
        <begin position="37"/>
        <end position="147"/>
    </location>
</feature>
<feature type="repeat" description="ANK 1">
    <location>
        <begin position="520"/>
        <end position="549"/>
    </location>
</feature>
<feature type="repeat" description="ANK 2">
    <location>
        <begin position="641"/>
        <end position="670"/>
    </location>
</feature>
<feature type="DNA-binding region" description="H-T-H motif" evidence="1">
    <location>
        <begin position="71"/>
        <end position="92"/>
    </location>
</feature>
<feature type="region of interest" description="Disordered" evidence="2">
    <location>
        <begin position="138"/>
        <end position="210"/>
    </location>
</feature>
<feature type="region of interest" description="Disordered" evidence="2">
    <location>
        <begin position="448"/>
        <end position="468"/>
    </location>
</feature>
<feature type="region of interest" description="Disordered" evidence="2">
    <location>
        <begin position="813"/>
        <end position="855"/>
    </location>
</feature>
<feature type="region of interest" description="Disordered" evidence="2">
    <location>
        <begin position="973"/>
        <end position="1017"/>
    </location>
</feature>
<feature type="compositionally biased region" description="Polar residues" evidence="2">
    <location>
        <begin position="152"/>
        <end position="172"/>
    </location>
</feature>
<feature type="compositionally biased region" description="Low complexity" evidence="2">
    <location>
        <begin position="179"/>
        <end position="201"/>
    </location>
</feature>
<feature type="compositionally biased region" description="Low complexity" evidence="2">
    <location>
        <begin position="448"/>
        <end position="457"/>
    </location>
</feature>
<feature type="compositionally biased region" description="Polar residues" evidence="2">
    <location>
        <begin position="458"/>
        <end position="468"/>
    </location>
</feature>
<feature type="compositionally biased region" description="Basic and acidic residues" evidence="2">
    <location>
        <begin position="818"/>
        <end position="837"/>
    </location>
</feature>
<feature type="compositionally biased region" description="Low complexity" evidence="2">
    <location>
        <begin position="846"/>
        <end position="855"/>
    </location>
</feature>
<feature type="compositionally biased region" description="Polar residues" evidence="2">
    <location>
        <begin position="1000"/>
        <end position="1010"/>
    </location>
</feature>
<feature type="modified residue" description="Phosphoserine" evidence="6">
    <location>
        <position position="255"/>
    </location>
</feature>
<feature type="modified residue" description="Phosphoserine" evidence="6">
    <location>
        <position position="806"/>
    </location>
</feature>
<feature type="sequence conflict" description="In Ref. 1; CAA35949." evidence="5" ref="1">
    <original>R</original>
    <variation>T</variation>
    <location>
        <position position="175"/>
    </location>
</feature>
<feature type="sequence conflict" description="In Ref. 1; CAA35949." evidence="5" ref="1">
    <original>V</original>
    <variation>I</variation>
    <location>
        <position position="431"/>
    </location>
</feature>
<feature type="sequence conflict" description="In Ref. 1; CAA35949." evidence="5" ref="1">
    <original>A</original>
    <variation>L</variation>
    <location>
        <position position="1054"/>
    </location>
</feature>
<name>SWI4_YEAST</name>
<organism>
    <name type="scientific">Saccharomyces cerevisiae (strain ATCC 204508 / S288c)</name>
    <name type="common">Baker's yeast</name>
    <dbReference type="NCBI Taxonomy" id="559292"/>
    <lineage>
        <taxon>Eukaryota</taxon>
        <taxon>Fungi</taxon>
        <taxon>Dikarya</taxon>
        <taxon>Ascomycota</taxon>
        <taxon>Saccharomycotina</taxon>
        <taxon>Saccharomycetes</taxon>
        <taxon>Saccharomycetales</taxon>
        <taxon>Saccharomycetaceae</taxon>
        <taxon>Saccharomyces</taxon>
    </lineage>
</organism>
<sequence>MPFDVLISNQKDNTNHQNITPISKSVLLAPHSNHPVIEIATYSETDVYECYIRGFETKIVMRRTKDDWINITQVFKIAQFSKTKRTKILEKESNDMQHEKVQGGYGRFQGTWIPLDSAKFLVNKYEIIDPVVNSILTFQFDPNNPPPKRSKNSILRKTSPGTKITSPSSYNKTPRKKNSSSSTSATTTAANKKGKKNASINQPNPSPLQNLVFQTPQQFQVNSSMNIMNNNDNHTTMNFNNDTRHNLINNISNNSNQSTIIQQQKSIHENSFNNNYSATQKPLQFFPIPTNLQNKNVALNNPNNNDSNSYSHNIDNVINSSNNNNNGNNNNLIIVPDGPMQSQQQQQHHHEYLTNNFNHSMMDSITNGNSKKRRKKLNQSNEQQFYNQQEKIQRHFKLMKQPLLWQSFQNPNDHHNEYCDSNGSNNNNNTVASNGSSIEVFSSNENDNSMNMSSRSMTPFSAGNTSSQNKLENKMTDQEYKQTILTILSSERSSDVDQALLATLYPAPKNFNINFEIDDQGHTPLHWATAMANIPLIKMLITLNANALQCNKLGFNCITKSIFYNNCYKENAFDEIISILKICLITPDVNGRLPFHYLIELSVNKSKNPMIIKSYMDSIILSLGQQDYNLLKICLNYQDNIGNTPLHLSALNLNFEVYNRLVYLGASTDILNLDNESPASIMNKFNTPAGGSNSRNNNTKADRKLARNLPQKNYYQQQQQQQQPQNNVKIPKIIKTQHPDKEDSTADVNIAKTDSEVNESQYLHSNQPNSTNMNTIMEDLSNINSFVTSSVIKDIKSTPSKILENSPILYRRRSQSISDEKEKAKDNENQVEKKKDPLNSVKTAMPSLESPSSLLPIQMSPLGKYSKPLSQQINKLNTKVSSLQRIMGEEIKNLDNEVVETESSISNNKKRLITIAHQIEDAFDSVSNKTPINSISDLQSRIKETSSKLNSEKQNFIQSLEKSQALKLATIVQDEESKVDMNTNSSSHPEKQEDEEPIPKSTSETSSPKNTKADAKFSNTVQESYDVNETLRLATELTILQFKRRMTTLKISEAKSKINSSVKLDKYRNLIGITIENIDSKLDDIEKDLRANA</sequence>